<comment type="function">
    <text evidence="1">Catalyzes the transfer of a N-acetyl-glucosamine moiety to 1D-myo-inositol 3-phosphate to produce 1D-myo-inositol 2-acetamido-2-deoxy-glucopyranoside 3-phosphate in the mycothiol biosynthesis pathway.</text>
</comment>
<comment type="catalytic activity">
    <reaction evidence="1">
        <text>1D-myo-inositol 3-phosphate + UDP-N-acetyl-alpha-D-glucosamine = 1D-myo-inositol 2-acetamido-2-deoxy-alpha-D-glucopyranoside 3-phosphate + UDP + H(+)</text>
        <dbReference type="Rhea" id="RHEA:26188"/>
        <dbReference type="ChEBI" id="CHEBI:15378"/>
        <dbReference type="ChEBI" id="CHEBI:57705"/>
        <dbReference type="ChEBI" id="CHEBI:58223"/>
        <dbReference type="ChEBI" id="CHEBI:58401"/>
        <dbReference type="ChEBI" id="CHEBI:58892"/>
        <dbReference type="EC" id="2.4.1.250"/>
    </reaction>
</comment>
<comment type="subunit">
    <text evidence="1">Homodimer.</text>
</comment>
<comment type="similarity">
    <text evidence="1">Belongs to the glycosyltransferase group 1 family. MshA subfamily.</text>
</comment>
<feature type="chain" id="PRO_0000400138" description="D-inositol 3-phosphate glycosyltransferase">
    <location>
        <begin position="1"/>
        <end position="439"/>
    </location>
</feature>
<feature type="binding site" evidence="1">
    <location>
        <position position="21"/>
    </location>
    <ligand>
        <name>1D-myo-inositol 3-phosphate</name>
        <dbReference type="ChEBI" id="CHEBI:58401"/>
    </ligand>
</feature>
<feature type="binding site" evidence="1">
    <location>
        <begin position="27"/>
        <end position="28"/>
    </location>
    <ligand>
        <name>UDP-N-acetyl-alpha-D-glucosamine</name>
        <dbReference type="ChEBI" id="CHEBI:57705"/>
    </ligand>
</feature>
<feature type="binding site" evidence="1">
    <location>
        <begin position="32"/>
        <end position="37"/>
    </location>
    <ligand>
        <name>1D-myo-inositol 3-phosphate</name>
        <dbReference type="ChEBI" id="CHEBI:58401"/>
    </ligand>
</feature>
<feature type="binding site" evidence="1">
    <location>
        <position position="35"/>
    </location>
    <ligand>
        <name>UDP-N-acetyl-alpha-D-glucosamine</name>
        <dbReference type="ChEBI" id="CHEBI:57705"/>
    </ligand>
</feature>
<feature type="binding site" evidence="1">
    <location>
        <position position="90"/>
    </location>
    <ligand>
        <name>1D-myo-inositol 3-phosphate</name>
        <dbReference type="ChEBI" id="CHEBI:58401"/>
    </ligand>
</feature>
<feature type="binding site" evidence="1">
    <location>
        <position position="123"/>
    </location>
    <ligand>
        <name>1D-myo-inositol 3-phosphate</name>
        <dbReference type="ChEBI" id="CHEBI:58401"/>
    </ligand>
</feature>
<feature type="binding site" evidence="1">
    <location>
        <position position="147"/>
    </location>
    <ligand>
        <name>1D-myo-inositol 3-phosphate</name>
        <dbReference type="ChEBI" id="CHEBI:58401"/>
    </ligand>
</feature>
<feature type="binding site" evidence="1">
    <location>
        <position position="167"/>
    </location>
    <ligand>
        <name>1D-myo-inositol 3-phosphate</name>
        <dbReference type="ChEBI" id="CHEBI:58401"/>
    </ligand>
</feature>
<feature type="binding site" evidence="1">
    <location>
        <position position="241"/>
    </location>
    <ligand>
        <name>UDP-N-acetyl-alpha-D-glucosamine</name>
        <dbReference type="ChEBI" id="CHEBI:57705"/>
    </ligand>
</feature>
<feature type="binding site" evidence="1">
    <location>
        <position position="246"/>
    </location>
    <ligand>
        <name>UDP-N-acetyl-alpha-D-glucosamine</name>
        <dbReference type="ChEBI" id="CHEBI:57705"/>
    </ligand>
</feature>
<feature type="binding site" evidence="1">
    <location>
        <position position="299"/>
    </location>
    <ligand>
        <name>UDP-N-acetyl-alpha-D-glucosamine</name>
        <dbReference type="ChEBI" id="CHEBI:57705"/>
    </ligand>
</feature>
<feature type="binding site" evidence="1">
    <location>
        <position position="308"/>
    </location>
    <ligand>
        <name>Mg(2+)</name>
        <dbReference type="ChEBI" id="CHEBI:18420"/>
    </ligand>
</feature>
<feature type="binding site" evidence="1">
    <location>
        <position position="309"/>
    </location>
    <ligand>
        <name>Mg(2+)</name>
        <dbReference type="ChEBI" id="CHEBI:18420"/>
    </ligand>
</feature>
<feature type="binding site" evidence="1">
    <location>
        <position position="311"/>
    </location>
    <ligand>
        <name>Mg(2+)</name>
        <dbReference type="ChEBI" id="CHEBI:18420"/>
    </ligand>
</feature>
<feature type="binding site" evidence="1">
    <location>
        <position position="321"/>
    </location>
    <ligand>
        <name>UDP-N-acetyl-alpha-D-glucosamine</name>
        <dbReference type="ChEBI" id="CHEBI:57705"/>
    </ligand>
</feature>
<feature type="binding site" evidence="1">
    <location>
        <position position="329"/>
    </location>
    <ligand>
        <name>UDP-N-acetyl-alpha-D-glucosamine</name>
        <dbReference type="ChEBI" id="CHEBI:57705"/>
    </ligand>
</feature>
<feature type="binding site" evidence="1">
    <location>
        <position position="335"/>
    </location>
    <ligand>
        <name>Mg(2+)</name>
        <dbReference type="ChEBI" id="CHEBI:18420"/>
    </ligand>
</feature>
<evidence type="ECO:0000255" key="1">
    <source>
        <dbReference type="HAMAP-Rule" id="MF_01695"/>
    </source>
</evidence>
<reference key="1">
    <citation type="submission" date="2007-02" db="EMBL/GenBank/DDBJ databases">
        <title>Complete sequence of Mycobacterium sp. JLS.</title>
        <authorList>
            <consortium name="US DOE Joint Genome Institute"/>
            <person name="Copeland A."/>
            <person name="Lucas S."/>
            <person name="Lapidus A."/>
            <person name="Barry K."/>
            <person name="Detter J.C."/>
            <person name="Glavina del Rio T."/>
            <person name="Hammon N."/>
            <person name="Israni S."/>
            <person name="Dalin E."/>
            <person name="Tice H."/>
            <person name="Pitluck S."/>
            <person name="Chain P."/>
            <person name="Malfatti S."/>
            <person name="Shin M."/>
            <person name="Vergez L."/>
            <person name="Schmutz J."/>
            <person name="Larimer F."/>
            <person name="Land M."/>
            <person name="Hauser L."/>
            <person name="Kyrpides N."/>
            <person name="Mikhailova N."/>
            <person name="Miller C.D."/>
            <person name="Anderson A.J."/>
            <person name="Sims R.C."/>
            <person name="Richardson P."/>
        </authorList>
    </citation>
    <scope>NUCLEOTIDE SEQUENCE [LARGE SCALE GENOMIC DNA]</scope>
    <source>
        <strain>JLS</strain>
    </source>
</reference>
<sequence>MRLATDQLGRPPQRVAVLSVHTSPLAQPGTGDAGGMNVYVLQSALHMARRGVEVEIFTRATTSADPPVVRVAPGVLVRNVVAGPFEGLDKYDLPTQLCAFTAGVLRAEATHEPGYYDIVHSHYWLSGQVGWLARDRWAVPLVHTAHTLAAVKNAALAEGDSPEPPLRAVGEQQVVDEADRLIVNTELEAEQLVSLHNADPSRIDVVHPGVDLDTFTPGDQAAARAALGLDPRETVVAFVGRIQPLKAPDILLRAAAKLPDVRVLVAGGPSGSGLAAPDNLVALADELGISERVTFLPPQSREDLVRVYRAADLVAVPSYSESFGLVAVEAQACGTPVVAAAVGGLPVAVRDGVTGALVDGHDVGDWAHTIDSLLSRGPATMRRAAVEHAATFSWAHTVDDLLASYGRAISDYRDRHPHADETLSRRTARRFSRRRGVRA</sequence>
<gene>
    <name evidence="1" type="primary">mshA</name>
    <name type="ordered locus">Mjls_0650</name>
</gene>
<keyword id="KW-0328">Glycosyltransferase</keyword>
<keyword id="KW-0460">Magnesium</keyword>
<keyword id="KW-0479">Metal-binding</keyword>
<keyword id="KW-0808">Transferase</keyword>
<proteinExistence type="inferred from homology"/>
<name>MSHA_MYCSJ</name>
<organism>
    <name type="scientific">Mycobacterium sp. (strain JLS)</name>
    <dbReference type="NCBI Taxonomy" id="164757"/>
    <lineage>
        <taxon>Bacteria</taxon>
        <taxon>Bacillati</taxon>
        <taxon>Actinomycetota</taxon>
        <taxon>Actinomycetes</taxon>
        <taxon>Mycobacteriales</taxon>
        <taxon>Mycobacteriaceae</taxon>
        <taxon>Mycobacterium</taxon>
    </lineage>
</organism>
<dbReference type="EC" id="2.4.1.250" evidence="1"/>
<dbReference type="EMBL" id="CP000580">
    <property type="protein sequence ID" value="ABN96461.1"/>
    <property type="molecule type" value="Genomic_DNA"/>
</dbReference>
<dbReference type="SMR" id="A3PU84"/>
<dbReference type="CAZy" id="GT4">
    <property type="family name" value="Glycosyltransferase Family 4"/>
</dbReference>
<dbReference type="KEGG" id="mjl:Mjls_0650"/>
<dbReference type="HOGENOM" id="CLU_009583_2_3_11"/>
<dbReference type="BioCyc" id="MSP164757:G1G8C-657-MONOMER"/>
<dbReference type="GO" id="GO:0008375">
    <property type="term" value="F:acetylglucosaminyltransferase activity"/>
    <property type="evidence" value="ECO:0007669"/>
    <property type="project" value="UniProtKB-UniRule"/>
</dbReference>
<dbReference type="GO" id="GO:0102710">
    <property type="term" value="F:D-inositol-3-phosphate glycosyltransferase activity"/>
    <property type="evidence" value="ECO:0007669"/>
    <property type="project" value="UniProtKB-EC"/>
</dbReference>
<dbReference type="GO" id="GO:0000287">
    <property type="term" value="F:magnesium ion binding"/>
    <property type="evidence" value="ECO:0007669"/>
    <property type="project" value="UniProtKB-UniRule"/>
</dbReference>
<dbReference type="GO" id="GO:0010125">
    <property type="term" value="P:mycothiol biosynthetic process"/>
    <property type="evidence" value="ECO:0007669"/>
    <property type="project" value="UniProtKB-UniRule"/>
</dbReference>
<dbReference type="CDD" id="cd03800">
    <property type="entry name" value="GT4_sucrose_synthase"/>
    <property type="match status" value="1"/>
</dbReference>
<dbReference type="FunFam" id="3.40.50.2000:FF:000123">
    <property type="entry name" value="D-inositol-3-phosphate glycosyltransferase"/>
    <property type="match status" value="1"/>
</dbReference>
<dbReference type="Gene3D" id="3.40.50.2000">
    <property type="entry name" value="Glycogen Phosphorylase B"/>
    <property type="match status" value="2"/>
</dbReference>
<dbReference type="HAMAP" id="MF_01695">
    <property type="entry name" value="MshA"/>
    <property type="match status" value="1"/>
</dbReference>
<dbReference type="InterPro" id="IPR001296">
    <property type="entry name" value="Glyco_trans_1"/>
</dbReference>
<dbReference type="InterPro" id="IPR028098">
    <property type="entry name" value="Glyco_trans_4-like_N"/>
</dbReference>
<dbReference type="InterPro" id="IPR017814">
    <property type="entry name" value="Mycothiol_biosynthesis_MshA"/>
</dbReference>
<dbReference type="NCBIfam" id="TIGR03449">
    <property type="entry name" value="mycothiol_MshA"/>
    <property type="match status" value="1"/>
</dbReference>
<dbReference type="PANTHER" id="PTHR12526:SF510">
    <property type="entry name" value="D-INOSITOL 3-PHOSPHATE GLYCOSYLTRANSFERASE"/>
    <property type="match status" value="1"/>
</dbReference>
<dbReference type="PANTHER" id="PTHR12526">
    <property type="entry name" value="GLYCOSYLTRANSFERASE"/>
    <property type="match status" value="1"/>
</dbReference>
<dbReference type="Pfam" id="PF13579">
    <property type="entry name" value="Glyco_trans_4_4"/>
    <property type="match status" value="1"/>
</dbReference>
<dbReference type="Pfam" id="PF00534">
    <property type="entry name" value="Glycos_transf_1"/>
    <property type="match status" value="1"/>
</dbReference>
<dbReference type="SUPFAM" id="SSF53756">
    <property type="entry name" value="UDP-Glycosyltransferase/glycogen phosphorylase"/>
    <property type="match status" value="1"/>
</dbReference>
<protein>
    <recommendedName>
        <fullName>D-inositol 3-phosphate glycosyltransferase</fullName>
        <ecNumber evidence="1">2.4.1.250</ecNumber>
    </recommendedName>
    <alternativeName>
        <fullName evidence="1">N-acetylglucosamine-inositol-phosphate N-acetylglucosaminyltransferase</fullName>
        <shortName evidence="1">GlcNAc-Ins-P N-acetylglucosaminyltransferase</shortName>
    </alternativeName>
</protein>
<accession>A3PU84</accession>